<evidence type="ECO:0000255" key="1">
    <source>
        <dbReference type="HAMAP-Rule" id="MF_01367"/>
    </source>
</evidence>
<evidence type="ECO:0000305" key="2"/>
<reference key="1">
    <citation type="journal article" date="2011" name="J. Bacteriol.">
        <title>Complete genome sequence and updated annotation of Desulfovibrio alaskensis G20.</title>
        <authorList>
            <person name="Hauser L.J."/>
            <person name="Land M.L."/>
            <person name="Brown S.D."/>
            <person name="Larimer F."/>
            <person name="Keller K.L."/>
            <person name="Rapp-Giles B.J."/>
            <person name="Price M.N."/>
            <person name="Lin M."/>
            <person name="Bruce D.C."/>
            <person name="Detter J.C."/>
            <person name="Tapia R."/>
            <person name="Han C.S."/>
            <person name="Goodwin L.A."/>
            <person name="Cheng J.F."/>
            <person name="Pitluck S."/>
            <person name="Copeland A."/>
            <person name="Lucas S."/>
            <person name="Nolan M."/>
            <person name="Lapidus A.L."/>
            <person name="Palumbo A.V."/>
            <person name="Wall J.D."/>
        </authorList>
    </citation>
    <scope>NUCLEOTIDE SEQUENCE [LARGE SCALE GENOMIC DNA]</scope>
    <source>
        <strain>ATCC BAA-1058 / DSM 17464 / G20</strain>
    </source>
</reference>
<comment type="function">
    <text evidence="1">Binds to 23S rRNA. Forms part of two intersubunit bridges in the 70S ribosome.</text>
</comment>
<comment type="subunit">
    <text evidence="1">Part of the 50S ribosomal subunit. Forms a cluster with proteins L3 and L19. In the 70S ribosome, L14 and L19 interact and together make contacts with the 16S rRNA in bridges B5 and B8.</text>
</comment>
<comment type="similarity">
    <text evidence="1">Belongs to the universal ribosomal protein uL14 family.</text>
</comment>
<organism>
    <name type="scientific">Oleidesulfovibrio alaskensis (strain ATCC BAA-1058 / DSM 17464 / G20)</name>
    <name type="common">Desulfovibrio alaskensis</name>
    <dbReference type="NCBI Taxonomy" id="207559"/>
    <lineage>
        <taxon>Bacteria</taxon>
        <taxon>Pseudomonadati</taxon>
        <taxon>Thermodesulfobacteriota</taxon>
        <taxon>Desulfovibrionia</taxon>
        <taxon>Desulfovibrionales</taxon>
        <taxon>Desulfovibrionaceae</taxon>
        <taxon>Oleidesulfovibrio</taxon>
    </lineage>
</organism>
<accession>Q30Z52</accession>
<keyword id="KW-1185">Reference proteome</keyword>
<keyword id="KW-0687">Ribonucleoprotein</keyword>
<keyword id="KW-0689">Ribosomal protein</keyword>
<keyword id="KW-0694">RNA-binding</keyword>
<keyword id="KW-0699">rRNA-binding</keyword>
<gene>
    <name evidence="1" type="primary">rplN</name>
    <name type="ordered locus">Dde_2247</name>
</gene>
<dbReference type="EMBL" id="CP000112">
    <property type="protein sequence ID" value="ABB39044.1"/>
    <property type="molecule type" value="Genomic_DNA"/>
</dbReference>
<dbReference type="RefSeq" id="WP_011368135.1">
    <property type="nucleotide sequence ID" value="NC_007519.1"/>
</dbReference>
<dbReference type="SMR" id="Q30Z52"/>
<dbReference type="STRING" id="207559.Dde_2247"/>
<dbReference type="KEGG" id="dde:Dde_2247"/>
<dbReference type="eggNOG" id="COG0093">
    <property type="taxonomic scope" value="Bacteria"/>
</dbReference>
<dbReference type="HOGENOM" id="CLU_095071_2_1_7"/>
<dbReference type="Proteomes" id="UP000002710">
    <property type="component" value="Chromosome"/>
</dbReference>
<dbReference type="GO" id="GO:0022625">
    <property type="term" value="C:cytosolic large ribosomal subunit"/>
    <property type="evidence" value="ECO:0007669"/>
    <property type="project" value="TreeGrafter"/>
</dbReference>
<dbReference type="GO" id="GO:0070180">
    <property type="term" value="F:large ribosomal subunit rRNA binding"/>
    <property type="evidence" value="ECO:0007669"/>
    <property type="project" value="TreeGrafter"/>
</dbReference>
<dbReference type="GO" id="GO:0003735">
    <property type="term" value="F:structural constituent of ribosome"/>
    <property type="evidence" value="ECO:0007669"/>
    <property type="project" value="InterPro"/>
</dbReference>
<dbReference type="GO" id="GO:0006412">
    <property type="term" value="P:translation"/>
    <property type="evidence" value="ECO:0007669"/>
    <property type="project" value="UniProtKB-UniRule"/>
</dbReference>
<dbReference type="CDD" id="cd00337">
    <property type="entry name" value="Ribosomal_uL14"/>
    <property type="match status" value="1"/>
</dbReference>
<dbReference type="FunFam" id="2.40.150.20:FF:000001">
    <property type="entry name" value="50S ribosomal protein L14"/>
    <property type="match status" value="1"/>
</dbReference>
<dbReference type="Gene3D" id="2.40.150.20">
    <property type="entry name" value="Ribosomal protein L14"/>
    <property type="match status" value="1"/>
</dbReference>
<dbReference type="HAMAP" id="MF_01367">
    <property type="entry name" value="Ribosomal_uL14"/>
    <property type="match status" value="1"/>
</dbReference>
<dbReference type="InterPro" id="IPR000218">
    <property type="entry name" value="Ribosomal_uL14"/>
</dbReference>
<dbReference type="InterPro" id="IPR005745">
    <property type="entry name" value="Ribosomal_uL14_bac-type"/>
</dbReference>
<dbReference type="InterPro" id="IPR019972">
    <property type="entry name" value="Ribosomal_uL14_CS"/>
</dbReference>
<dbReference type="InterPro" id="IPR036853">
    <property type="entry name" value="Ribosomal_uL14_sf"/>
</dbReference>
<dbReference type="NCBIfam" id="TIGR01067">
    <property type="entry name" value="rplN_bact"/>
    <property type="match status" value="1"/>
</dbReference>
<dbReference type="PANTHER" id="PTHR11761">
    <property type="entry name" value="50S/60S RIBOSOMAL PROTEIN L14/L23"/>
    <property type="match status" value="1"/>
</dbReference>
<dbReference type="PANTHER" id="PTHR11761:SF3">
    <property type="entry name" value="LARGE RIBOSOMAL SUBUNIT PROTEIN UL14M"/>
    <property type="match status" value="1"/>
</dbReference>
<dbReference type="Pfam" id="PF00238">
    <property type="entry name" value="Ribosomal_L14"/>
    <property type="match status" value="1"/>
</dbReference>
<dbReference type="SMART" id="SM01374">
    <property type="entry name" value="Ribosomal_L14"/>
    <property type="match status" value="1"/>
</dbReference>
<dbReference type="SUPFAM" id="SSF50193">
    <property type="entry name" value="Ribosomal protein L14"/>
    <property type="match status" value="1"/>
</dbReference>
<dbReference type="PROSITE" id="PS00049">
    <property type="entry name" value="RIBOSOMAL_L14"/>
    <property type="match status" value="1"/>
</dbReference>
<proteinExistence type="inferred from homology"/>
<name>RL14_OLEA2</name>
<sequence>MIQVESALQVADNSGAKKVACIKVLGGSKRRYASVGDVIVVSVKEALPHSKVKKGDVMKAVVVRTAKEIRRNDGSYIKFDTNAAVLLNKQGEPVGTRIFGPVARELRARNYMKIVSLAPEVL</sequence>
<feature type="chain" id="PRO_0000266478" description="Large ribosomal subunit protein uL14">
    <location>
        <begin position="1"/>
        <end position="122"/>
    </location>
</feature>
<protein>
    <recommendedName>
        <fullName evidence="1">Large ribosomal subunit protein uL14</fullName>
    </recommendedName>
    <alternativeName>
        <fullName evidence="2">50S ribosomal protein L14</fullName>
    </alternativeName>
</protein>